<feature type="signal peptide" evidence="1">
    <location>
        <begin position="1"/>
        <end position="20"/>
    </location>
</feature>
<feature type="chain" id="PRO_0000010937" description="Interleukin-27 subunit beta">
    <location>
        <begin position="21"/>
        <end position="229"/>
    </location>
</feature>
<feature type="domain" description="Fibronectin type-III 1" evidence="2">
    <location>
        <begin position="24"/>
        <end position="130"/>
    </location>
</feature>
<feature type="domain" description="Fibronectin type-III 2" evidence="2">
    <location>
        <begin position="131"/>
        <end position="227"/>
    </location>
</feature>
<feature type="glycosylation site" description="N-linked (GlcNAc...) asparagine" evidence="1">
    <location>
        <position position="55"/>
    </location>
</feature>
<feature type="glycosylation site" description="N-linked (GlcNAc...) asparagine" evidence="1">
    <location>
        <position position="105"/>
    </location>
</feature>
<feature type="sequence variant" id="VAR_049171" description="In dbSNP:rs1803524.">
    <original>A</original>
    <variation>V</variation>
    <location>
        <position position="174"/>
    </location>
</feature>
<feature type="sequence variant" id="VAR_024342" description="In dbSNP:rs4740." evidence="6 7">
    <original>V</original>
    <variation>I</variation>
    <location>
        <position position="201"/>
    </location>
</feature>
<feature type="sequence conflict" description="In Ref. 1; AAA93193." evidence="8" ref="1">
    <original>QL</original>
    <variation>HV</variation>
    <location>
        <begin position="144"/>
        <end position="145"/>
    </location>
</feature>
<feature type="strand" evidence="10">
    <location>
        <begin position="34"/>
        <end position="39"/>
    </location>
</feature>
<feature type="turn" evidence="10">
    <location>
        <begin position="40"/>
        <end position="42"/>
    </location>
</feature>
<feature type="strand" evidence="10">
    <location>
        <begin position="43"/>
        <end position="47"/>
    </location>
</feature>
<feature type="strand" evidence="10">
    <location>
        <begin position="63"/>
        <end position="70"/>
    </location>
</feature>
<feature type="strand" evidence="10">
    <location>
        <begin position="72"/>
        <end position="74"/>
    </location>
</feature>
<feature type="strand" evidence="9">
    <location>
        <begin position="80"/>
        <end position="83"/>
    </location>
</feature>
<feature type="strand" evidence="10">
    <location>
        <begin position="87"/>
        <end position="93"/>
    </location>
</feature>
<feature type="strand" evidence="10">
    <location>
        <begin position="95"/>
        <end position="97"/>
    </location>
</feature>
<feature type="strand" evidence="10">
    <location>
        <begin position="102"/>
        <end position="107"/>
    </location>
</feature>
<feature type="strand" evidence="10">
    <location>
        <begin position="117"/>
        <end position="121"/>
    </location>
</feature>
<feature type="helix" evidence="10">
    <location>
        <begin position="124"/>
        <end position="126"/>
    </location>
</feature>
<feature type="strand" evidence="10">
    <location>
        <begin position="133"/>
        <end position="140"/>
    </location>
</feature>
<feature type="turn" evidence="10">
    <location>
        <begin position="141"/>
        <end position="143"/>
    </location>
</feature>
<feature type="strand" evidence="10">
    <location>
        <begin position="144"/>
        <end position="150"/>
    </location>
</feature>
<feature type="turn" evidence="10">
    <location>
        <begin position="158"/>
        <end position="160"/>
    </location>
</feature>
<feature type="strand" evidence="10">
    <location>
        <begin position="163"/>
        <end position="171"/>
    </location>
</feature>
<feature type="strand" evidence="10">
    <location>
        <begin position="178"/>
        <end position="190"/>
    </location>
</feature>
<feature type="strand" evidence="10">
    <location>
        <begin position="198"/>
        <end position="207"/>
    </location>
</feature>
<feature type="strand" evidence="10">
    <location>
        <begin position="221"/>
        <end position="224"/>
    </location>
</feature>
<comment type="function">
    <text evidence="3">Associates with IL27 to form the IL-27 interleukin, a heterodimeric cytokine which functions in innate immunity. IL-27 has pro- and anti-inflammatory properties, that can regulate T-helper cell development, suppress T-cell proliferation, stimulate cytotoxic T-cell activity, induce isotype switching in B-cells, and that has diverse effects on innate immune cells. Among its target cells are CD4 T-helper cells which can differentiate in type 1 effector cells (TH1), type 2 effector cells (TH2) and IL17 producing helper T-cells (TH17). It drives rapid clonal expansion of naive but not memory CD4 T-cells. It also strongly synergizes with IL-12 to trigger interferon-gamma/IFN-gamma production of naive CD4 T-cells, binds to the cytokine receptor WSX-1/TCCR. Another important role of IL-27 is its antitumor activity as well as its antiangiogenic activity with activation of production of antiangiogenic chemokines.</text>
</comment>
<comment type="subunit">
    <text evidence="3 4 5">Heterodimer with IL27/IL27A; not disulfide-linked (PubMed:12121660). This heterodimer is known as interleukin IL-27 (PubMed:12121660). Heterodimer with IL12A; not disulfide-linked (PubMed:9342359). This heterodimer is known as interleukin IL-35 (PubMed:9342359). Interacts with SQSTM1 (PubMed:8551575).</text>
</comment>
<comment type="interaction">
    <interactant intactId="EBI-742959">
        <id>Q14213</id>
    </interactant>
    <interactant intactId="EBI-15887997">
        <id>Q8NEV9</id>
        <label>IL27</label>
    </interactant>
    <organismsDiffer>false</organismsDiffer>
    <experiments>2</experiments>
</comment>
<comment type="subcellular location">
    <subcellularLocation>
        <location evidence="5">Secreted</location>
    </subcellularLocation>
</comment>
<comment type="induction">
    <text evidence="4">By Epstein-Barr virus (EBV).</text>
</comment>
<comment type="similarity">
    <text evidence="8">Belongs to the type I cytokine receptor family. Type 3 subfamily.</text>
</comment>
<comment type="online information" name="Wikipedia">
    <link uri="https://en.wikipedia.org/wiki/Interleukin_27"/>
    <text>Interleukin-27 entry</text>
</comment>
<reference key="1">
    <citation type="journal article" date="1996" name="J. Virol.">
        <title>A novel interleukin-12 p40-related protein induced by latent Epstein-Barr virus infection in B lymphocytes.</title>
        <authorList>
            <person name="Devergne O."/>
            <person name="Hummel M."/>
            <person name="Koeppen H."/>
            <person name="Le Beau M.M."/>
            <person name="Nathanson E.C."/>
            <person name="Kieff E."/>
            <person name="Birkenbach M."/>
        </authorList>
    </citation>
    <scope>NUCLEOTIDE SEQUENCE [MRNA]</scope>
    <scope>INDUCTION</scope>
    <scope>GLYCOSYLATION</scope>
    <scope>INTERACTION WITH SQSTM1</scope>
    <source>
        <tissue>B-cell</tissue>
    </source>
</reference>
<reference key="2">
    <citation type="submission" date="2006-10" db="EMBL/GenBank/DDBJ databases">
        <authorList>
            <person name="Livingston R.J."/>
            <person name="Shaffer T."/>
            <person name="McFarland I."/>
            <person name="Nguyen C.P."/>
            <person name="Stanaway I.B."/>
            <person name="Rajkumar N."/>
            <person name="Johnson E.J."/>
            <person name="da Ponte S.H."/>
            <person name="Willa H."/>
            <person name="Ahearn M.O."/>
            <person name="Bertucci C."/>
            <person name="Acklestad J."/>
            <person name="Carroll A."/>
            <person name="Swanson J."/>
            <person name="Gildersleeve H.I."/>
            <person name="Nickerson D.A."/>
        </authorList>
    </citation>
    <scope>NUCLEOTIDE SEQUENCE [GENOMIC DNA]</scope>
    <scope>VARIANT ILE-201</scope>
</reference>
<reference key="3">
    <citation type="journal article" date="2004" name="Nature">
        <title>The DNA sequence and biology of human chromosome 19.</title>
        <authorList>
            <person name="Grimwood J."/>
            <person name="Gordon L.A."/>
            <person name="Olsen A.S."/>
            <person name="Terry A."/>
            <person name="Schmutz J."/>
            <person name="Lamerdin J.E."/>
            <person name="Hellsten U."/>
            <person name="Goodstein D."/>
            <person name="Couronne O."/>
            <person name="Tran-Gyamfi M."/>
            <person name="Aerts A."/>
            <person name="Altherr M."/>
            <person name="Ashworth L."/>
            <person name="Bajorek E."/>
            <person name="Black S."/>
            <person name="Branscomb E."/>
            <person name="Caenepeel S."/>
            <person name="Carrano A.V."/>
            <person name="Caoile C."/>
            <person name="Chan Y.M."/>
            <person name="Christensen M."/>
            <person name="Cleland C.A."/>
            <person name="Copeland A."/>
            <person name="Dalin E."/>
            <person name="Dehal P."/>
            <person name="Denys M."/>
            <person name="Detter J.C."/>
            <person name="Escobar J."/>
            <person name="Flowers D."/>
            <person name="Fotopulos D."/>
            <person name="Garcia C."/>
            <person name="Georgescu A.M."/>
            <person name="Glavina T."/>
            <person name="Gomez M."/>
            <person name="Gonzales E."/>
            <person name="Groza M."/>
            <person name="Hammon N."/>
            <person name="Hawkins T."/>
            <person name="Haydu L."/>
            <person name="Ho I."/>
            <person name="Huang W."/>
            <person name="Israni S."/>
            <person name="Jett J."/>
            <person name="Kadner K."/>
            <person name="Kimball H."/>
            <person name="Kobayashi A."/>
            <person name="Larionov V."/>
            <person name="Leem S.-H."/>
            <person name="Lopez F."/>
            <person name="Lou Y."/>
            <person name="Lowry S."/>
            <person name="Malfatti S."/>
            <person name="Martinez D."/>
            <person name="McCready P.M."/>
            <person name="Medina C."/>
            <person name="Morgan J."/>
            <person name="Nelson K."/>
            <person name="Nolan M."/>
            <person name="Ovcharenko I."/>
            <person name="Pitluck S."/>
            <person name="Pollard M."/>
            <person name="Popkie A.P."/>
            <person name="Predki P."/>
            <person name="Quan G."/>
            <person name="Ramirez L."/>
            <person name="Rash S."/>
            <person name="Retterer J."/>
            <person name="Rodriguez A."/>
            <person name="Rogers S."/>
            <person name="Salamov A."/>
            <person name="Salazar A."/>
            <person name="She X."/>
            <person name="Smith D."/>
            <person name="Slezak T."/>
            <person name="Solovyev V."/>
            <person name="Thayer N."/>
            <person name="Tice H."/>
            <person name="Tsai M."/>
            <person name="Ustaszewska A."/>
            <person name="Vo N."/>
            <person name="Wagner M."/>
            <person name="Wheeler J."/>
            <person name="Wu K."/>
            <person name="Xie G."/>
            <person name="Yang J."/>
            <person name="Dubchak I."/>
            <person name="Furey T.S."/>
            <person name="DeJong P."/>
            <person name="Dickson M."/>
            <person name="Gordon D."/>
            <person name="Eichler E.E."/>
            <person name="Pennacchio L.A."/>
            <person name="Richardson P."/>
            <person name="Stubbs L."/>
            <person name="Rokhsar D.S."/>
            <person name="Myers R.M."/>
            <person name="Rubin E.M."/>
            <person name="Lucas S.M."/>
        </authorList>
    </citation>
    <scope>NUCLEOTIDE SEQUENCE [LARGE SCALE GENOMIC DNA]</scope>
</reference>
<reference key="4">
    <citation type="submission" date="2005-09" db="EMBL/GenBank/DDBJ databases">
        <authorList>
            <person name="Mural R.J."/>
            <person name="Istrail S."/>
            <person name="Sutton G.G."/>
            <person name="Florea L."/>
            <person name="Halpern A.L."/>
            <person name="Mobarry C.M."/>
            <person name="Lippert R."/>
            <person name="Walenz B."/>
            <person name="Shatkay H."/>
            <person name="Dew I."/>
            <person name="Miller J.R."/>
            <person name="Flanigan M.J."/>
            <person name="Edwards N.J."/>
            <person name="Bolanos R."/>
            <person name="Fasulo D."/>
            <person name="Halldorsson B.V."/>
            <person name="Hannenhalli S."/>
            <person name="Turner R."/>
            <person name="Yooseph S."/>
            <person name="Lu F."/>
            <person name="Nusskern D.R."/>
            <person name="Shue B.C."/>
            <person name="Zheng X.H."/>
            <person name="Zhong F."/>
            <person name="Delcher A.L."/>
            <person name="Huson D.H."/>
            <person name="Kravitz S.A."/>
            <person name="Mouchard L."/>
            <person name="Reinert K."/>
            <person name="Remington K.A."/>
            <person name="Clark A.G."/>
            <person name="Waterman M.S."/>
            <person name="Eichler E.E."/>
            <person name="Adams M.D."/>
            <person name="Hunkapiller M.W."/>
            <person name="Myers E.W."/>
            <person name="Venter J.C."/>
        </authorList>
    </citation>
    <scope>NUCLEOTIDE SEQUENCE [LARGE SCALE GENOMIC DNA]</scope>
    <scope>VARIANT ILE-201</scope>
</reference>
<reference key="5">
    <citation type="journal article" date="2004" name="Genome Res.">
        <title>The status, quality, and expansion of the NIH full-length cDNA project: the Mammalian Gene Collection (MGC).</title>
        <authorList>
            <consortium name="The MGC Project Team"/>
        </authorList>
    </citation>
    <scope>NUCLEOTIDE SEQUENCE [LARGE SCALE MRNA]</scope>
    <source>
        <tissue>Pancreas</tissue>
    </source>
</reference>
<reference key="6">
    <citation type="journal article" date="1997" name="Proc. Natl. Acad. Sci. U.S.A.">
        <title>Epstein-Barr virus-induced gene 3 and the p35 subunit of interleukin 12 form a novel heterodimeric hematopoietin.</title>
        <authorList>
            <person name="Devergne O."/>
            <person name="Birkenbach M."/>
            <person name="Kieff E."/>
        </authorList>
    </citation>
    <scope>SUBUNIT</scope>
    <scope>SUBCELLULAR LOCATION</scope>
</reference>
<reference key="7">
    <citation type="journal article" date="2002" name="Immunity">
        <title>IL-27, a heterodimeric cytokine composed of EBI3 and p28 protein, induces proliferation of naive CD4(+) T cells.</title>
        <authorList>
            <person name="Pflanz S."/>
            <person name="Timans J.C."/>
            <person name="Cheung J."/>
            <person name="Rosales R."/>
            <person name="Kanzler H."/>
            <person name="Gilbert J."/>
            <person name="Hibbert L."/>
            <person name="Churakova T."/>
            <person name="Travis M."/>
            <person name="Vaisberg E."/>
            <person name="Blumenschein W.M."/>
            <person name="Mattson J.D."/>
            <person name="Wagner J.L."/>
            <person name="To W."/>
            <person name="Zurawski S."/>
            <person name="McClanahan T.K."/>
            <person name="Gorman D.M."/>
            <person name="Bazan J.F."/>
            <person name="de Waal Malefyt R."/>
            <person name="Rennick D."/>
            <person name="Kastelein R.A."/>
        </authorList>
    </citation>
    <scope>FUNCTION</scope>
    <scope>SUBUNIT</scope>
</reference>
<reference key="8">
    <citation type="journal article" date="2007" name="J. Mol. Med.">
        <title>The biology and therapeutic potential of interleukin 27.</title>
        <authorList>
            <person name="Batten M."/>
            <person name="Ghilardi N."/>
        </authorList>
    </citation>
    <scope>REVIEW ON IL-27</scope>
</reference>
<sequence length="229" mass="25396">MTPQLLLALVLWASCPPCSGRKGPPAALTLPRVQCRASRYPIAVDCSWTLPPAPNSTSPVSFIATYRLGMAARGHSWPCLQQTPTSTSCTITDVQLFSMAPYVLNVTAVHPWGSSSSFVPFITEHIIKPDPPEGVRLSPLAERQLQVQWEPPGSWPFPEIFSLKYWIRYKRQGAARFHRVGPIEATSFILRAVRPRARYYVQVAAQDLTDYGELSDWSLPATATMSLGK</sequence>
<gene>
    <name type="primary">EBI3</name>
    <name type="synonym">IL27B</name>
</gene>
<proteinExistence type="evidence at protein level"/>
<organism>
    <name type="scientific">Homo sapiens</name>
    <name type="common">Human</name>
    <dbReference type="NCBI Taxonomy" id="9606"/>
    <lineage>
        <taxon>Eukaryota</taxon>
        <taxon>Metazoa</taxon>
        <taxon>Chordata</taxon>
        <taxon>Craniata</taxon>
        <taxon>Vertebrata</taxon>
        <taxon>Euteleostomi</taxon>
        <taxon>Mammalia</taxon>
        <taxon>Eutheria</taxon>
        <taxon>Euarchontoglires</taxon>
        <taxon>Primates</taxon>
        <taxon>Haplorrhini</taxon>
        <taxon>Catarrhini</taxon>
        <taxon>Hominidae</taxon>
        <taxon>Homo</taxon>
    </lineage>
</organism>
<name>IL27B_HUMAN</name>
<protein>
    <recommendedName>
        <fullName>Interleukin-27 subunit beta</fullName>
        <shortName>IL-27 subunit beta</shortName>
        <shortName>IL-27B</shortName>
    </recommendedName>
    <alternativeName>
        <fullName>Epstein-Barr virus-induced gene 3 protein</fullName>
        <shortName>EBV-induced gene 3 protein</shortName>
    </alternativeName>
</protein>
<keyword id="KW-0002">3D-structure</keyword>
<keyword id="KW-0202">Cytokine</keyword>
<keyword id="KW-0325">Glycoprotein</keyword>
<keyword id="KW-1267">Proteomics identification</keyword>
<keyword id="KW-1185">Reference proteome</keyword>
<keyword id="KW-0677">Repeat</keyword>
<keyword id="KW-0964">Secreted</keyword>
<keyword id="KW-0732">Signal</keyword>
<evidence type="ECO:0000255" key="1"/>
<evidence type="ECO:0000255" key="2">
    <source>
        <dbReference type="PROSITE-ProRule" id="PRU00316"/>
    </source>
</evidence>
<evidence type="ECO:0000269" key="3">
    <source>
    </source>
</evidence>
<evidence type="ECO:0000269" key="4">
    <source>
    </source>
</evidence>
<evidence type="ECO:0000269" key="5">
    <source>
    </source>
</evidence>
<evidence type="ECO:0000269" key="6">
    <source ref="2"/>
</evidence>
<evidence type="ECO:0000269" key="7">
    <source ref="4"/>
</evidence>
<evidence type="ECO:0000305" key="8"/>
<evidence type="ECO:0007829" key="9">
    <source>
        <dbReference type="PDB" id="7U7N"/>
    </source>
</evidence>
<evidence type="ECO:0007829" key="10">
    <source>
        <dbReference type="PDB" id="7ZXK"/>
    </source>
</evidence>
<dbReference type="EMBL" id="L08187">
    <property type="protein sequence ID" value="AAA93193.1"/>
    <property type="molecule type" value="mRNA"/>
</dbReference>
<dbReference type="EMBL" id="EF064740">
    <property type="protein sequence ID" value="ABK41923.1"/>
    <property type="molecule type" value="Genomic_DNA"/>
</dbReference>
<dbReference type="EMBL" id="AC005578">
    <property type="protein sequence ID" value="AAC33488.1"/>
    <property type="molecule type" value="Genomic_DNA"/>
</dbReference>
<dbReference type="EMBL" id="CH471139">
    <property type="protein sequence ID" value="EAW69245.1"/>
    <property type="molecule type" value="Genomic_DNA"/>
</dbReference>
<dbReference type="EMBL" id="BC015364">
    <property type="protein sequence ID" value="AAH15364.1"/>
    <property type="molecule type" value="mRNA"/>
</dbReference>
<dbReference type="EMBL" id="BC046112">
    <property type="protein sequence ID" value="AAH46112.1"/>
    <property type="molecule type" value="mRNA"/>
</dbReference>
<dbReference type="CCDS" id="CCDS12123.1"/>
<dbReference type="RefSeq" id="NP_005746.2">
    <property type="nucleotide sequence ID" value="NM_005755.2"/>
</dbReference>
<dbReference type="RefSeq" id="XP_011525921.1">
    <property type="nucleotide sequence ID" value="XM_011527619.2"/>
</dbReference>
<dbReference type="RefSeq" id="XP_054175469.1">
    <property type="nucleotide sequence ID" value="XM_054319494.1"/>
</dbReference>
<dbReference type="PDB" id="7U7N">
    <property type="method" value="EM"/>
    <property type="resolution" value="3.47 A"/>
    <property type="chains" value="C=21-228"/>
</dbReference>
<dbReference type="PDB" id="7ZXK">
    <property type="method" value="X-ray"/>
    <property type="resolution" value="2.20 A"/>
    <property type="chains" value="B/D=21-229"/>
</dbReference>
<dbReference type="PDB" id="8D85">
    <property type="method" value="EM"/>
    <property type="resolution" value="3.81 A"/>
    <property type="chains" value="C=21-229"/>
</dbReference>
<dbReference type="PDB" id="8XWY">
    <property type="method" value="X-ray"/>
    <property type="resolution" value="3.40 A"/>
    <property type="chains" value="B/C=21-229"/>
</dbReference>
<dbReference type="PDBsum" id="7U7N"/>
<dbReference type="PDBsum" id="7ZXK"/>
<dbReference type="PDBsum" id="8D85"/>
<dbReference type="PDBsum" id="8XWY"/>
<dbReference type="EMDB" id="EMD-26382"/>
<dbReference type="EMDB" id="EMD-27246"/>
<dbReference type="EMDB" id="EMD-27247"/>
<dbReference type="SMR" id="Q14213"/>
<dbReference type="BioGRID" id="115450">
    <property type="interactions" value="39"/>
</dbReference>
<dbReference type="ComplexPortal" id="CPX-25744">
    <property type="entry name" value="Interleukin-35 complex"/>
</dbReference>
<dbReference type="ComplexPortal" id="CPX-8822">
    <property type="entry name" value="Interleukin-27 complex"/>
</dbReference>
<dbReference type="ComplexPortal" id="CPX-8836">
    <property type="entry name" value="Interleukin-27 receptor-ligand complex"/>
</dbReference>
<dbReference type="CORUM" id="Q14213"/>
<dbReference type="DIP" id="DIP-57556N"/>
<dbReference type="FunCoup" id="Q14213">
    <property type="interactions" value="405"/>
</dbReference>
<dbReference type="IntAct" id="Q14213">
    <property type="interactions" value="12"/>
</dbReference>
<dbReference type="MINT" id="Q14213"/>
<dbReference type="STRING" id="9606.ENSP00000221847"/>
<dbReference type="GlyCosmos" id="Q14213">
    <property type="glycosylation" value="2 sites, No reported glycans"/>
</dbReference>
<dbReference type="GlyGen" id="Q14213">
    <property type="glycosylation" value="2 sites"/>
</dbReference>
<dbReference type="iPTMnet" id="Q14213"/>
<dbReference type="BioMuta" id="EBI3"/>
<dbReference type="DMDM" id="47605806"/>
<dbReference type="jPOST" id="Q14213"/>
<dbReference type="MassIVE" id="Q14213"/>
<dbReference type="PaxDb" id="9606-ENSP00000221847"/>
<dbReference type="PeptideAtlas" id="Q14213"/>
<dbReference type="ProteomicsDB" id="59933"/>
<dbReference type="Pumba" id="Q14213"/>
<dbReference type="Antibodypedia" id="23527">
    <property type="antibodies" value="1125 antibodies from 41 providers"/>
</dbReference>
<dbReference type="DNASU" id="10148"/>
<dbReference type="Ensembl" id="ENST00000221847.6">
    <property type="protein sequence ID" value="ENSP00000221847.4"/>
    <property type="gene ID" value="ENSG00000105246.6"/>
</dbReference>
<dbReference type="GeneID" id="10148"/>
<dbReference type="KEGG" id="hsa:10148"/>
<dbReference type="MANE-Select" id="ENST00000221847.6">
    <property type="protein sequence ID" value="ENSP00000221847.4"/>
    <property type="RefSeq nucleotide sequence ID" value="NM_005755.3"/>
    <property type="RefSeq protein sequence ID" value="NP_005746.2"/>
</dbReference>
<dbReference type="UCSC" id="uc002lzu.4">
    <property type="organism name" value="human"/>
</dbReference>
<dbReference type="AGR" id="HGNC:3129"/>
<dbReference type="CTD" id="10148"/>
<dbReference type="DisGeNET" id="10148"/>
<dbReference type="GeneCards" id="EBI3"/>
<dbReference type="HGNC" id="HGNC:3129">
    <property type="gene designation" value="EBI3"/>
</dbReference>
<dbReference type="HPA" id="ENSG00000105246">
    <property type="expression patterns" value="Tissue enriched (placenta)"/>
</dbReference>
<dbReference type="MIM" id="605816">
    <property type="type" value="gene"/>
</dbReference>
<dbReference type="neXtProt" id="NX_Q14213"/>
<dbReference type="OpenTargets" id="ENSG00000105246"/>
<dbReference type="PharmGKB" id="PA27584"/>
<dbReference type="VEuPathDB" id="HostDB:ENSG00000105246"/>
<dbReference type="eggNOG" id="ENOG502RXJ4">
    <property type="taxonomic scope" value="Eukaryota"/>
</dbReference>
<dbReference type="GeneTree" id="ENSGT00940000160050"/>
<dbReference type="HOGENOM" id="CLU_047259_2_0_1"/>
<dbReference type="InParanoid" id="Q14213"/>
<dbReference type="OMA" id="FQVCAKE"/>
<dbReference type="OrthoDB" id="6381660at2759"/>
<dbReference type="PAN-GO" id="Q14213">
    <property type="GO annotations" value="6 GO annotations based on evolutionary models"/>
</dbReference>
<dbReference type="PhylomeDB" id="Q14213"/>
<dbReference type="TreeFam" id="TF331210"/>
<dbReference type="PathwayCommons" id="Q14213"/>
<dbReference type="Reactome" id="R-HSA-8984722">
    <property type="pathway name" value="Interleukin-35 Signalling"/>
</dbReference>
<dbReference type="Reactome" id="R-HSA-9020956">
    <property type="pathway name" value="Interleukin-27 signaling"/>
</dbReference>
<dbReference type="SignaLink" id="Q14213"/>
<dbReference type="BioGRID-ORCS" id="10148">
    <property type="hits" value="28 hits in 1146 CRISPR screens"/>
</dbReference>
<dbReference type="ChiTaRS" id="EBI3">
    <property type="organism name" value="human"/>
</dbReference>
<dbReference type="GeneWiki" id="EBI3"/>
<dbReference type="GenomeRNAi" id="10148"/>
<dbReference type="Pharos" id="Q14213">
    <property type="development level" value="Tbio"/>
</dbReference>
<dbReference type="PRO" id="PR:Q14213"/>
<dbReference type="Proteomes" id="UP000005640">
    <property type="component" value="Chromosome 19"/>
</dbReference>
<dbReference type="RNAct" id="Q14213">
    <property type="molecule type" value="protein"/>
</dbReference>
<dbReference type="Bgee" id="ENSG00000105246">
    <property type="expression patterns" value="Expressed in placenta and 102 other cell types or tissues"/>
</dbReference>
<dbReference type="GO" id="GO:0005788">
    <property type="term" value="C:endoplasmic reticulum lumen"/>
    <property type="evidence" value="ECO:0000304"/>
    <property type="project" value="Reactome"/>
</dbReference>
<dbReference type="GO" id="GO:0005576">
    <property type="term" value="C:extracellular region"/>
    <property type="evidence" value="ECO:0000304"/>
    <property type="project" value="Reactome"/>
</dbReference>
<dbReference type="GO" id="GO:0005615">
    <property type="term" value="C:extracellular space"/>
    <property type="evidence" value="ECO:0000304"/>
    <property type="project" value="ProtInc"/>
</dbReference>
<dbReference type="GO" id="GO:0005886">
    <property type="term" value="C:plasma membrane"/>
    <property type="evidence" value="ECO:0000304"/>
    <property type="project" value="ProtInc"/>
</dbReference>
<dbReference type="GO" id="GO:0005125">
    <property type="term" value="F:cytokine activity"/>
    <property type="evidence" value="ECO:0007669"/>
    <property type="project" value="UniProtKB-KW"/>
</dbReference>
<dbReference type="GO" id="GO:0004896">
    <property type="term" value="F:cytokine receptor activity"/>
    <property type="evidence" value="ECO:0000353"/>
    <property type="project" value="UniProtKB"/>
</dbReference>
<dbReference type="GO" id="GO:0045523">
    <property type="term" value="F:interleukin-27 receptor binding"/>
    <property type="evidence" value="ECO:0000318"/>
    <property type="project" value="GO_Central"/>
</dbReference>
<dbReference type="GO" id="GO:0006959">
    <property type="term" value="P:humoral immune response"/>
    <property type="evidence" value="ECO:0000304"/>
    <property type="project" value="ProtInc"/>
</dbReference>
<dbReference type="GO" id="GO:0046641">
    <property type="term" value="P:positive regulation of alpha-beta T cell proliferation"/>
    <property type="evidence" value="ECO:0000304"/>
    <property type="project" value="UniProtKB"/>
</dbReference>
<dbReference type="GO" id="GO:0032729">
    <property type="term" value="P:positive regulation of type II interferon production"/>
    <property type="evidence" value="ECO:0000304"/>
    <property type="project" value="UniProtKB"/>
</dbReference>
<dbReference type="GO" id="GO:0042098">
    <property type="term" value="P:T cell proliferation"/>
    <property type="evidence" value="ECO:0000318"/>
    <property type="project" value="GO_Central"/>
</dbReference>
<dbReference type="GO" id="GO:0042088">
    <property type="term" value="P:T-helper 1 type immune response"/>
    <property type="evidence" value="ECO:0000304"/>
    <property type="project" value="UniProtKB"/>
</dbReference>
<dbReference type="CDD" id="cd00063">
    <property type="entry name" value="FN3"/>
    <property type="match status" value="1"/>
</dbReference>
<dbReference type="FunFam" id="2.60.40.10:FF:000136">
    <property type="entry name" value="Ciliary neurotrophic factor receptor alpha"/>
    <property type="match status" value="1"/>
</dbReference>
<dbReference type="FunFam" id="2.60.40.10:FF:001499">
    <property type="entry name" value="Interleukin-27 subunit beta"/>
    <property type="match status" value="1"/>
</dbReference>
<dbReference type="Gene3D" id="2.60.40.10">
    <property type="entry name" value="Immunoglobulins"/>
    <property type="match status" value="2"/>
</dbReference>
<dbReference type="InterPro" id="IPR003961">
    <property type="entry name" value="FN3_dom"/>
</dbReference>
<dbReference type="InterPro" id="IPR056621">
    <property type="entry name" value="FN3_IL27B_N"/>
</dbReference>
<dbReference type="InterPro" id="IPR036116">
    <property type="entry name" value="FN3_sf"/>
</dbReference>
<dbReference type="InterPro" id="IPR003530">
    <property type="entry name" value="Hematopoietin_rcpt_L_F3_CS"/>
</dbReference>
<dbReference type="InterPro" id="IPR013783">
    <property type="entry name" value="Ig-like_fold"/>
</dbReference>
<dbReference type="InterPro" id="IPR053073">
    <property type="entry name" value="IL11/IL27_subunit_beta"/>
</dbReference>
<dbReference type="PANTHER" id="PTHR48483">
    <property type="entry name" value="INTERLEUKIN-27 SUBUNIT BETA"/>
    <property type="match status" value="1"/>
</dbReference>
<dbReference type="PANTHER" id="PTHR48483:SF2">
    <property type="entry name" value="INTERLEUKIN-27 SUBUNIT BETA"/>
    <property type="match status" value="1"/>
</dbReference>
<dbReference type="Pfam" id="PF00041">
    <property type="entry name" value="fn3"/>
    <property type="match status" value="1"/>
</dbReference>
<dbReference type="Pfam" id="PF24031">
    <property type="entry name" value="FN3_IL27B_N"/>
    <property type="match status" value="1"/>
</dbReference>
<dbReference type="SMART" id="SM00060">
    <property type="entry name" value="FN3"/>
    <property type="match status" value="2"/>
</dbReference>
<dbReference type="SUPFAM" id="SSF49265">
    <property type="entry name" value="Fibronectin type III"/>
    <property type="match status" value="1"/>
</dbReference>
<dbReference type="PROSITE" id="PS50853">
    <property type="entry name" value="FN3"/>
    <property type="match status" value="2"/>
</dbReference>
<dbReference type="PROSITE" id="PS01354">
    <property type="entry name" value="HEMATOPO_REC_L_F3"/>
    <property type="match status" value="1"/>
</dbReference>
<accession>Q14213</accession>
<accession>A0N0N2</accession>
<accession>O75269</accession>